<dbReference type="EMBL" id="CP000250">
    <property type="protein sequence ID" value="ABD07446.1"/>
    <property type="molecule type" value="Genomic_DNA"/>
</dbReference>
<dbReference type="RefSeq" id="WP_011441631.1">
    <property type="nucleotide sequence ID" value="NC_007778.1"/>
</dbReference>
<dbReference type="SMR" id="Q2IWG4"/>
<dbReference type="STRING" id="316058.RPB_2744"/>
<dbReference type="KEGG" id="rpb:RPB_2744"/>
<dbReference type="eggNOG" id="COG1826">
    <property type="taxonomic scope" value="Bacteria"/>
</dbReference>
<dbReference type="HOGENOM" id="CLU_086034_1_3_5"/>
<dbReference type="OrthoDB" id="7206969at2"/>
<dbReference type="Proteomes" id="UP000008809">
    <property type="component" value="Chromosome"/>
</dbReference>
<dbReference type="GO" id="GO:0033281">
    <property type="term" value="C:TAT protein transport complex"/>
    <property type="evidence" value="ECO:0007669"/>
    <property type="project" value="UniProtKB-UniRule"/>
</dbReference>
<dbReference type="GO" id="GO:0008320">
    <property type="term" value="F:protein transmembrane transporter activity"/>
    <property type="evidence" value="ECO:0007669"/>
    <property type="project" value="UniProtKB-UniRule"/>
</dbReference>
<dbReference type="GO" id="GO:0043953">
    <property type="term" value="P:protein transport by the Tat complex"/>
    <property type="evidence" value="ECO:0007669"/>
    <property type="project" value="UniProtKB-UniRule"/>
</dbReference>
<dbReference type="Gene3D" id="1.20.5.3310">
    <property type="match status" value="1"/>
</dbReference>
<dbReference type="HAMAP" id="MF_00237">
    <property type="entry name" value="TatB"/>
    <property type="match status" value="1"/>
</dbReference>
<dbReference type="InterPro" id="IPR018448">
    <property type="entry name" value="TatB"/>
</dbReference>
<dbReference type="NCBIfam" id="TIGR01410">
    <property type="entry name" value="tatB"/>
    <property type="match status" value="1"/>
</dbReference>
<dbReference type="PANTHER" id="PTHR33162">
    <property type="entry name" value="SEC-INDEPENDENT PROTEIN TRANSLOCASE PROTEIN TATA, CHLOROPLASTIC"/>
    <property type="match status" value="1"/>
</dbReference>
<dbReference type="PANTHER" id="PTHR33162:SF1">
    <property type="entry name" value="SEC-INDEPENDENT PROTEIN TRANSLOCASE PROTEIN TATA, CHLOROPLASTIC"/>
    <property type="match status" value="1"/>
</dbReference>
<dbReference type="PRINTS" id="PR01506">
    <property type="entry name" value="TATBPROTEIN"/>
</dbReference>
<feature type="chain" id="PRO_0000301226" description="Sec-independent protein translocase protein TatB">
    <location>
        <begin position="1"/>
        <end position="188"/>
    </location>
</feature>
<feature type="transmembrane region" description="Helical" evidence="1">
    <location>
        <begin position="1"/>
        <end position="21"/>
    </location>
</feature>
<feature type="region of interest" description="Disordered" evidence="2">
    <location>
        <begin position="147"/>
        <end position="188"/>
    </location>
</feature>
<feature type="compositionally biased region" description="Low complexity" evidence="2">
    <location>
        <begin position="160"/>
        <end position="170"/>
    </location>
</feature>
<protein>
    <recommendedName>
        <fullName evidence="1">Sec-independent protein translocase protein TatB</fullName>
    </recommendedName>
</protein>
<organism>
    <name type="scientific">Rhodopseudomonas palustris (strain HaA2)</name>
    <dbReference type="NCBI Taxonomy" id="316058"/>
    <lineage>
        <taxon>Bacteria</taxon>
        <taxon>Pseudomonadati</taxon>
        <taxon>Pseudomonadota</taxon>
        <taxon>Alphaproteobacteria</taxon>
        <taxon>Hyphomicrobiales</taxon>
        <taxon>Nitrobacteraceae</taxon>
        <taxon>Rhodopseudomonas</taxon>
    </lineage>
</organism>
<gene>
    <name evidence="1" type="primary">tatB</name>
    <name type="ordered locus">RPB_2744</name>
</gene>
<comment type="function">
    <text evidence="1">Part of the twin-arginine translocation (Tat) system that transports large folded proteins containing a characteristic twin-arginine motif in their signal peptide across membranes. Together with TatC, TatB is part of a receptor directly interacting with Tat signal peptides. TatB may form an oligomeric binding site that transiently accommodates folded Tat precursor proteins before their translocation.</text>
</comment>
<comment type="subunit">
    <text evidence="1">The Tat system comprises two distinct complexes: a TatABC complex, containing multiple copies of TatA, TatB and TatC subunits, and a separate TatA complex, containing only TatA subunits. Substrates initially bind to the TatABC complex, which probably triggers association of the separate TatA complex to form the active translocon.</text>
</comment>
<comment type="subcellular location">
    <subcellularLocation>
        <location evidence="1">Cell inner membrane</location>
        <topology evidence="1">Single-pass membrane protein</topology>
    </subcellularLocation>
</comment>
<comment type="similarity">
    <text evidence="1">Belongs to the TatB family.</text>
</comment>
<reference key="1">
    <citation type="submission" date="2006-01" db="EMBL/GenBank/DDBJ databases">
        <title>Complete sequence of Rhodopseudomonas palustris HaA2.</title>
        <authorList>
            <consortium name="US DOE Joint Genome Institute"/>
            <person name="Copeland A."/>
            <person name="Lucas S."/>
            <person name="Lapidus A."/>
            <person name="Barry K."/>
            <person name="Detter J.C."/>
            <person name="Glavina T."/>
            <person name="Hammon N."/>
            <person name="Israni S."/>
            <person name="Pitluck S."/>
            <person name="Chain P."/>
            <person name="Malfatti S."/>
            <person name="Shin M."/>
            <person name="Vergez L."/>
            <person name="Schmutz J."/>
            <person name="Larimer F."/>
            <person name="Land M."/>
            <person name="Hauser L."/>
            <person name="Pelletier D.A."/>
            <person name="Kyrpides N."/>
            <person name="Anderson I."/>
            <person name="Oda Y."/>
            <person name="Harwood C.S."/>
            <person name="Richardson P."/>
        </authorList>
    </citation>
    <scope>NUCLEOTIDE SEQUENCE [LARGE SCALE GENOMIC DNA]</scope>
    <source>
        <strain>HaA2</strain>
    </source>
</reference>
<evidence type="ECO:0000255" key="1">
    <source>
        <dbReference type="HAMAP-Rule" id="MF_00237"/>
    </source>
</evidence>
<evidence type="ECO:0000256" key="2">
    <source>
        <dbReference type="SAM" id="MobiDB-lite"/>
    </source>
</evidence>
<sequence length="188" mass="19636">MFDIGWSELVVIGVVALVAIGPKELPGVLRMVGQWMGKARKLASEFQGQFQEAMREAEMADLKKSFDEVKEATAGLSTNNMLTKLGSELSEAAAIDKSALDSPPVEPTTPAPPTPETFIEATTHQAVTGEPLAIVSEAQAAGAHTTLPVPAETHALATTDLAPPDLAHPAPAHPEPTNSEPAKDAKAS</sequence>
<accession>Q2IWG4</accession>
<name>TATB_RHOP2</name>
<keyword id="KW-0997">Cell inner membrane</keyword>
<keyword id="KW-1003">Cell membrane</keyword>
<keyword id="KW-0472">Membrane</keyword>
<keyword id="KW-0653">Protein transport</keyword>
<keyword id="KW-1185">Reference proteome</keyword>
<keyword id="KW-0811">Translocation</keyword>
<keyword id="KW-0812">Transmembrane</keyword>
<keyword id="KW-1133">Transmembrane helix</keyword>
<keyword id="KW-0813">Transport</keyword>
<proteinExistence type="inferred from homology"/>